<protein>
    <recommendedName>
        <fullName evidence="1">Uracil-DNA glycosylase</fullName>
        <shortName evidence="1">UDG</shortName>
        <ecNumber evidence="1">3.2.2.27</ecNumber>
    </recommendedName>
</protein>
<reference key="1">
    <citation type="submission" date="2008-10" db="EMBL/GenBank/DDBJ databases">
        <title>Genome sequence of Bacillus cereus B4264.</title>
        <authorList>
            <person name="Dodson R.J."/>
            <person name="Durkin A.S."/>
            <person name="Rosovitz M.J."/>
            <person name="Rasko D.A."/>
            <person name="Hoffmaster A."/>
            <person name="Ravel J."/>
            <person name="Sutton G."/>
        </authorList>
    </citation>
    <scope>NUCLEOTIDE SEQUENCE [LARGE SCALE GENOMIC DNA]</scope>
    <source>
        <strain>B4264</strain>
    </source>
</reference>
<organism>
    <name type="scientific">Bacillus cereus (strain B4264)</name>
    <dbReference type="NCBI Taxonomy" id="405532"/>
    <lineage>
        <taxon>Bacteria</taxon>
        <taxon>Bacillati</taxon>
        <taxon>Bacillota</taxon>
        <taxon>Bacilli</taxon>
        <taxon>Bacillales</taxon>
        <taxon>Bacillaceae</taxon>
        <taxon>Bacillus</taxon>
        <taxon>Bacillus cereus group</taxon>
    </lineage>
</organism>
<accession>B7HG60</accession>
<keyword id="KW-0963">Cytoplasm</keyword>
<keyword id="KW-0227">DNA damage</keyword>
<keyword id="KW-0234">DNA repair</keyword>
<keyword id="KW-0378">Hydrolase</keyword>
<comment type="function">
    <text evidence="1">Excises uracil residues from the DNA which can arise as a result of misincorporation of dUMP residues by DNA polymerase or due to deamination of cytosine.</text>
</comment>
<comment type="catalytic activity">
    <reaction evidence="1">
        <text>Hydrolyzes single-stranded DNA or mismatched double-stranded DNA and polynucleotides, releasing free uracil.</text>
        <dbReference type="EC" id="3.2.2.27"/>
    </reaction>
</comment>
<comment type="subcellular location">
    <subcellularLocation>
        <location evidence="1">Cytoplasm</location>
    </subcellularLocation>
</comment>
<comment type="similarity">
    <text evidence="1">Belongs to the uracil-DNA glycosylase (UDG) superfamily. UNG family.</text>
</comment>
<name>UNG_BACC4</name>
<proteinExistence type="inferred from homology"/>
<evidence type="ECO:0000255" key="1">
    <source>
        <dbReference type="HAMAP-Rule" id="MF_00148"/>
    </source>
</evidence>
<dbReference type="EC" id="3.2.2.27" evidence="1"/>
<dbReference type="EMBL" id="CP001176">
    <property type="protein sequence ID" value="ACK59100.1"/>
    <property type="molecule type" value="Genomic_DNA"/>
</dbReference>
<dbReference type="RefSeq" id="WP_000432519.1">
    <property type="nucleotide sequence ID" value="NZ_VEHB01000004.1"/>
</dbReference>
<dbReference type="SMR" id="B7HG60"/>
<dbReference type="KEGG" id="bcb:BCB4264_A5521"/>
<dbReference type="HOGENOM" id="CLU_032162_3_0_9"/>
<dbReference type="Proteomes" id="UP000007096">
    <property type="component" value="Chromosome"/>
</dbReference>
<dbReference type="GO" id="GO:0005737">
    <property type="term" value="C:cytoplasm"/>
    <property type="evidence" value="ECO:0007669"/>
    <property type="project" value="UniProtKB-SubCell"/>
</dbReference>
<dbReference type="GO" id="GO:0004844">
    <property type="term" value="F:uracil DNA N-glycosylase activity"/>
    <property type="evidence" value="ECO:0007669"/>
    <property type="project" value="UniProtKB-UniRule"/>
</dbReference>
<dbReference type="GO" id="GO:0097510">
    <property type="term" value="P:base-excision repair, AP site formation via deaminated base removal"/>
    <property type="evidence" value="ECO:0007669"/>
    <property type="project" value="TreeGrafter"/>
</dbReference>
<dbReference type="CDD" id="cd10027">
    <property type="entry name" value="UDG-F1-like"/>
    <property type="match status" value="1"/>
</dbReference>
<dbReference type="FunFam" id="3.40.470.10:FF:000001">
    <property type="entry name" value="Uracil-DNA glycosylase"/>
    <property type="match status" value="1"/>
</dbReference>
<dbReference type="Gene3D" id="3.40.470.10">
    <property type="entry name" value="Uracil-DNA glycosylase-like domain"/>
    <property type="match status" value="1"/>
</dbReference>
<dbReference type="HAMAP" id="MF_00148">
    <property type="entry name" value="UDG"/>
    <property type="match status" value="1"/>
</dbReference>
<dbReference type="InterPro" id="IPR002043">
    <property type="entry name" value="UDG_fam1"/>
</dbReference>
<dbReference type="InterPro" id="IPR018085">
    <property type="entry name" value="Ura-DNA_Glyclase_AS"/>
</dbReference>
<dbReference type="InterPro" id="IPR005122">
    <property type="entry name" value="Uracil-DNA_glycosylase-like"/>
</dbReference>
<dbReference type="InterPro" id="IPR036895">
    <property type="entry name" value="Uracil-DNA_glycosylase-like_sf"/>
</dbReference>
<dbReference type="NCBIfam" id="NF003588">
    <property type="entry name" value="PRK05254.1-1"/>
    <property type="match status" value="1"/>
</dbReference>
<dbReference type="NCBIfam" id="NF003589">
    <property type="entry name" value="PRK05254.1-2"/>
    <property type="match status" value="1"/>
</dbReference>
<dbReference type="NCBIfam" id="NF003591">
    <property type="entry name" value="PRK05254.1-4"/>
    <property type="match status" value="1"/>
</dbReference>
<dbReference type="NCBIfam" id="NF003592">
    <property type="entry name" value="PRK05254.1-5"/>
    <property type="match status" value="1"/>
</dbReference>
<dbReference type="NCBIfam" id="TIGR00628">
    <property type="entry name" value="ung"/>
    <property type="match status" value="1"/>
</dbReference>
<dbReference type="PANTHER" id="PTHR11264">
    <property type="entry name" value="URACIL-DNA GLYCOSYLASE"/>
    <property type="match status" value="1"/>
</dbReference>
<dbReference type="PANTHER" id="PTHR11264:SF0">
    <property type="entry name" value="URACIL-DNA GLYCOSYLASE"/>
    <property type="match status" value="1"/>
</dbReference>
<dbReference type="Pfam" id="PF03167">
    <property type="entry name" value="UDG"/>
    <property type="match status" value="1"/>
</dbReference>
<dbReference type="SMART" id="SM00986">
    <property type="entry name" value="UDG"/>
    <property type="match status" value="1"/>
</dbReference>
<dbReference type="SMART" id="SM00987">
    <property type="entry name" value="UreE_C"/>
    <property type="match status" value="1"/>
</dbReference>
<dbReference type="SUPFAM" id="SSF52141">
    <property type="entry name" value="Uracil-DNA glycosylase-like"/>
    <property type="match status" value="1"/>
</dbReference>
<dbReference type="PROSITE" id="PS00130">
    <property type="entry name" value="U_DNA_GLYCOSYLASE"/>
    <property type="match status" value="1"/>
</dbReference>
<gene>
    <name evidence="1" type="primary">ung</name>
    <name type="ordered locus">BCB4264_A5521</name>
</gene>
<feature type="chain" id="PRO_1000199767" description="Uracil-DNA glycosylase">
    <location>
        <begin position="1"/>
        <end position="225"/>
    </location>
</feature>
<feature type="active site" description="Proton acceptor" evidence="1">
    <location>
        <position position="65"/>
    </location>
</feature>
<sequence>MENVLKNDWEPLLAPEFEKEYYLTLSSFLTEEYSTHVVYPKVEDIFNALQYTSYENTKVVILGQDPYHGPNQAHGLSFSVQPGVKTPPSLLNMYKELRDEYGYEIPNNGYLVKWAEQGVLLLNTVLTVRQGEANSHKGKGWEHFTDRVIELLNEREKPVIFILWGRHAQAKKKLITNPNHHIIESVHPSPLSARRGFFGSKPYSKINTILANMGEREIDWEIPNL</sequence>